<comment type="function">
    <text evidence="1">Participates actively in the response to hyperosmotic and heat shock by preventing the aggregation of stress-denatured proteins and by disaggregating proteins, also in an autonomous, DnaK-independent fashion. Unfolded proteins bind initially to DnaJ; upon interaction with the DnaJ-bound protein, DnaK hydrolyzes its bound ATP, resulting in the formation of a stable complex. GrpE releases ADP from DnaK; ATP binding to DnaK triggers the release of the substrate protein, thus completing the reaction cycle. Several rounds of ATP-dependent interactions between DnaJ, DnaK and GrpE are required for fully efficient folding. Also involved, together with DnaK and GrpE, in the DNA replication of plasmids through activation of initiation proteins.</text>
</comment>
<comment type="cofactor">
    <cofactor evidence="1">
        <name>Zn(2+)</name>
        <dbReference type="ChEBI" id="CHEBI:29105"/>
    </cofactor>
    <text evidence="1">Binds 2 Zn(2+) ions per monomer.</text>
</comment>
<comment type="subunit">
    <text evidence="1">Homodimer.</text>
</comment>
<comment type="subcellular location">
    <subcellularLocation>
        <location evidence="1">Cytoplasm</location>
    </subcellularLocation>
</comment>
<comment type="domain">
    <text evidence="1">The J domain is necessary and sufficient to stimulate DnaK ATPase activity. Zinc center 1 plays an important role in the autonomous, DnaK-independent chaperone activity of DnaJ. Zinc center 2 is essential for interaction with DnaK and for DnaJ activity.</text>
</comment>
<comment type="similarity">
    <text evidence="1">Belongs to the DnaJ family.</text>
</comment>
<protein>
    <recommendedName>
        <fullName evidence="1">Chaperone protein DnaJ</fullName>
    </recommendedName>
</protein>
<feature type="chain" id="PRO_0000070709" description="Chaperone protein DnaJ">
    <location>
        <begin position="1"/>
        <end position="379"/>
    </location>
</feature>
<feature type="domain" description="J" evidence="1">
    <location>
        <begin position="5"/>
        <end position="70"/>
    </location>
</feature>
<feature type="repeat" description="CXXCXGXG motif">
    <location>
        <begin position="148"/>
        <end position="155"/>
    </location>
</feature>
<feature type="repeat" description="CXXCXGXG motif">
    <location>
        <begin position="165"/>
        <end position="172"/>
    </location>
</feature>
<feature type="repeat" description="CXXCXGXG motif">
    <location>
        <begin position="187"/>
        <end position="194"/>
    </location>
</feature>
<feature type="repeat" description="CXXCXGXG motif">
    <location>
        <begin position="201"/>
        <end position="208"/>
    </location>
</feature>
<feature type="zinc finger region" description="CR-type" evidence="1">
    <location>
        <begin position="135"/>
        <end position="213"/>
    </location>
</feature>
<feature type="binding site" evidence="1">
    <location>
        <position position="148"/>
    </location>
    <ligand>
        <name>Zn(2+)</name>
        <dbReference type="ChEBI" id="CHEBI:29105"/>
        <label>1</label>
    </ligand>
</feature>
<feature type="binding site" evidence="1">
    <location>
        <position position="151"/>
    </location>
    <ligand>
        <name>Zn(2+)</name>
        <dbReference type="ChEBI" id="CHEBI:29105"/>
        <label>1</label>
    </ligand>
</feature>
<feature type="binding site" evidence="1">
    <location>
        <position position="165"/>
    </location>
    <ligand>
        <name>Zn(2+)</name>
        <dbReference type="ChEBI" id="CHEBI:29105"/>
        <label>2</label>
    </ligand>
</feature>
<feature type="binding site" evidence="1">
    <location>
        <position position="168"/>
    </location>
    <ligand>
        <name>Zn(2+)</name>
        <dbReference type="ChEBI" id="CHEBI:29105"/>
        <label>2</label>
    </ligand>
</feature>
<feature type="binding site" evidence="1">
    <location>
        <position position="187"/>
    </location>
    <ligand>
        <name>Zn(2+)</name>
        <dbReference type="ChEBI" id="CHEBI:29105"/>
        <label>2</label>
    </ligand>
</feature>
<feature type="binding site" evidence="1">
    <location>
        <position position="190"/>
    </location>
    <ligand>
        <name>Zn(2+)</name>
        <dbReference type="ChEBI" id="CHEBI:29105"/>
        <label>2</label>
    </ligand>
</feature>
<feature type="binding site" evidence="1">
    <location>
        <position position="201"/>
    </location>
    <ligand>
        <name>Zn(2+)</name>
        <dbReference type="ChEBI" id="CHEBI:29105"/>
        <label>1</label>
    </ligand>
</feature>
<feature type="binding site" evidence="1">
    <location>
        <position position="204"/>
    </location>
    <ligand>
        <name>Zn(2+)</name>
        <dbReference type="ChEBI" id="CHEBI:29105"/>
        <label>1</label>
    </ligand>
</feature>
<dbReference type="EMBL" id="CP000030">
    <property type="protein sequence ID" value="AAV87090.1"/>
    <property type="molecule type" value="Genomic_DNA"/>
</dbReference>
<dbReference type="RefSeq" id="WP_010268992.1">
    <property type="nucleotide sequence ID" value="NZ_AFMU01000059.1"/>
</dbReference>
<dbReference type="SMR" id="Q5P9E0"/>
<dbReference type="GeneID" id="7398565"/>
<dbReference type="KEGG" id="ama:AM1296"/>
<dbReference type="PATRIC" id="fig|320483.3.peg.1122"/>
<dbReference type="HOGENOM" id="CLU_017633_0_7_5"/>
<dbReference type="GO" id="GO:0005737">
    <property type="term" value="C:cytoplasm"/>
    <property type="evidence" value="ECO:0007669"/>
    <property type="project" value="UniProtKB-SubCell"/>
</dbReference>
<dbReference type="GO" id="GO:0005524">
    <property type="term" value="F:ATP binding"/>
    <property type="evidence" value="ECO:0007669"/>
    <property type="project" value="InterPro"/>
</dbReference>
<dbReference type="GO" id="GO:0031072">
    <property type="term" value="F:heat shock protein binding"/>
    <property type="evidence" value="ECO:0007669"/>
    <property type="project" value="InterPro"/>
</dbReference>
<dbReference type="GO" id="GO:0051082">
    <property type="term" value="F:unfolded protein binding"/>
    <property type="evidence" value="ECO:0007669"/>
    <property type="project" value="UniProtKB-UniRule"/>
</dbReference>
<dbReference type="GO" id="GO:0008270">
    <property type="term" value="F:zinc ion binding"/>
    <property type="evidence" value="ECO:0007669"/>
    <property type="project" value="UniProtKB-UniRule"/>
</dbReference>
<dbReference type="GO" id="GO:0051085">
    <property type="term" value="P:chaperone cofactor-dependent protein refolding"/>
    <property type="evidence" value="ECO:0007669"/>
    <property type="project" value="TreeGrafter"/>
</dbReference>
<dbReference type="GO" id="GO:0006260">
    <property type="term" value="P:DNA replication"/>
    <property type="evidence" value="ECO:0007669"/>
    <property type="project" value="UniProtKB-KW"/>
</dbReference>
<dbReference type="GO" id="GO:0042026">
    <property type="term" value="P:protein refolding"/>
    <property type="evidence" value="ECO:0007669"/>
    <property type="project" value="TreeGrafter"/>
</dbReference>
<dbReference type="GO" id="GO:0009408">
    <property type="term" value="P:response to heat"/>
    <property type="evidence" value="ECO:0007669"/>
    <property type="project" value="InterPro"/>
</dbReference>
<dbReference type="CDD" id="cd06257">
    <property type="entry name" value="DnaJ"/>
    <property type="match status" value="1"/>
</dbReference>
<dbReference type="CDD" id="cd10747">
    <property type="entry name" value="DnaJ_C"/>
    <property type="match status" value="1"/>
</dbReference>
<dbReference type="CDD" id="cd10719">
    <property type="entry name" value="DnaJ_zf"/>
    <property type="match status" value="1"/>
</dbReference>
<dbReference type="FunFam" id="1.10.287.110:FF:000034">
    <property type="entry name" value="Chaperone protein DnaJ"/>
    <property type="match status" value="1"/>
</dbReference>
<dbReference type="FunFam" id="2.10.230.10:FF:000002">
    <property type="entry name" value="Molecular chaperone DnaJ"/>
    <property type="match status" value="1"/>
</dbReference>
<dbReference type="FunFam" id="2.60.260.20:FF:000004">
    <property type="entry name" value="Molecular chaperone DnaJ"/>
    <property type="match status" value="1"/>
</dbReference>
<dbReference type="Gene3D" id="1.10.287.110">
    <property type="entry name" value="DnaJ domain"/>
    <property type="match status" value="1"/>
</dbReference>
<dbReference type="Gene3D" id="2.10.230.10">
    <property type="entry name" value="Heat shock protein DnaJ, cysteine-rich domain"/>
    <property type="match status" value="1"/>
</dbReference>
<dbReference type="Gene3D" id="2.60.260.20">
    <property type="entry name" value="Urease metallochaperone UreE, N-terminal domain"/>
    <property type="match status" value="2"/>
</dbReference>
<dbReference type="HAMAP" id="MF_01152">
    <property type="entry name" value="DnaJ"/>
    <property type="match status" value="1"/>
</dbReference>
<dbReference type="InterPro" id="IPR012724">
    <property type="entry name" value="DnaJ"/>
</dbReference>
<dbReference type="InterPro" id="IPR002939">
    <property type="entry name" value="DnaJ_C"/>
</dbReference>
<dbReference type="InterPro" id="IPR001623">
    <property type="entry name" value="DnaJ_domain"/>
</dbReference>
<dbReference type="InterPro" id="IPR018253">
    <property type="entry name" value="DnaJ_domain_CS"/>
</dbReference>
<dbReference type="InterPro" id="IPR008971">
    <property type="entry name" value="HSP40/DnaJ_pept-bd"/>
</dbReference>
<dbReference type="InterPro" id="IPR001305">
    <property type="entry name" value="HSP_DnaJ_Cys-rich_dom"/>
</dbReference>
<dbReference type="InterPro" id="IPR036410">
    <property type="entry name" value="HSP_DnaJ_Cys-rich_dom_sf"/>
</dbReference>
<dbReference type="InterPro" id="IPR036869">
    <property type="entry name" value="J_dom_sf"/>
</dbReference>
<dbReference type="NCBIfam" id="TIGR02349">
    <property type="entry name" value="DnaJ_bact"/>
    <property type="match status" value="1"/>
</dbReference>
<dbReference type="NCBIfam" id="NF008035">
    <property type="entry name" value="PRK10767.1"/>
    <property type="match status" value="1"/>
</dbReference>
<dbReference type="PANTHER" id="PTHR43096:SF48">
    <property type="entry name" value="CHAPERONE PROTEIN DNAJ"/>
    <property type="match status" value="1"/>
</dbReference>
<dbReference type="PANTHER" id="PTHR43096">
    <property type="entry name" value="DNAJ HOMOLOG 1, MITOCHONDRIAL-RELATED"/>
    <property type="match status" value="1"/>
</dbReference>
<dbReference type="Pfam" id="PF00226">
    <property type="entry name" value="DnaJ"/>
    <property type="match status" value="1"/>
</dbReference>
<dbReference type="Pfam" id="PF01556">
    <property type="entry name" value="DnaJ_C"/>
    <property type="match status" value="1"/>
</dbReference>
<dbReference type="Pfam" id="PF00684">
    <property type="entry name" value="DnaJ_CXXCXGXG"/>
    <property type="match status" value="1"/>
</dbReference>
<dbReference type="PRINTS" id="PR00625">
    <property type="entry name" value="JDOMAIN"/>
</dbReference>
<dbReference type="SMART" id="SM00271">
    <property type="entry name" value="DnaJ"/>
    <property type="match status" value="1"/>
</dbReference>
<dbReference type="SUPFAM" id="SSF46565">
    <property type="entry name" value="Chaperone J-domain"/>
    <property type="match status" value="1"/>
</dbReference>
<dbReference type="SUPFAM" id="SSF57938">
    <property type="entry name" value="DnaJ/Hsp40 cysteine-rich domain"/>
    <property type="match status" value="1"/>
</dbReference>
<dbReference type="SUPFAM" id="SSF49493">
    <property type="entry name" value="HSP40/DnaJ peptide-binding domain"/>
    <property type="match status" value="2"/>
</dbReference>
<dbReference type="PROSITE" id="PS00636">
    <property type="entry name" value="DNAJ_1"/>
    <property type="match status" value="1"/>
</dbReference>
<dbReference type="PROSITE" id="PS50076">
    <property type="entry name" value="DNAJ_2"/>
    <property type="match status" value="1"/>
</dbReference>
<dbReference type="PROSITE" id="PS51188">
    <property type="entry name" value="ZF_CR"/>
    <property type="match status" value="1"/>
</dbReference>
<organism>
    <name type="scientific">Anaplasma marginale (strain St. Maries)</name>
    <dbReference type="NCBI Taxonomy" id="234826"/>
    <lineage>
        <taxon>Bacteria</taxon>
        <taxon>Pseudomonadati</taxon>
        <taxon>Pseudomonadota</taxon>
        <taxon>Alphaproteobacteria</taxon>
        <taxon>Rickettsiales</taxon>
        <taxon>Anaplasmataceae</taxon>
        <taxon>Anaplasma</taxon>
    </lineage>
</organism>
<keyword id="KW-0143">Chaperone</keyword>
<keyword id="KW-0963">Cytoplasm</keyword>
<keyword id="KW-0235">DNA replication</keyword>
<keyword id="KW-0479">Metal-binding</keyword>
<keyword id="KW-0677">Repeat</keyword>
<keyword id="KW-0346">Stress response</keyword>
<keyword id="KW-0862">Zinc</keyword>
<keyword id="KW-0863">Zinc-finger</keyword>
<name>DNAJ_ANAMM</name>
<proteinExistence type="inferred from homology"/>
<sequence>MSGNDYYEILEVSRNASAEEIKKSYRKMVFKYHPDKNPGDKKAEEKFKKISEAYEVLSNPEKRAAYDRYGHSTFTSGGASGFDFTSGFSTDFSDIFQDFFGGGFGKSQRASSREHLRGSDLRYDVEVSLEDAFKGIKVPISYVTNVKCSSCSGIGSEGAVNSVKCGNCNGAGSVRTRKGFLTIEEVCNVCNGEGEVIKNKCRRCGGSGRVRNEVSLLVTVPKGIETGNKVRVNGKGEAGFRGAQEGDLYVYIRVKEHKFFTRRSSDLHCSVPIKMTIAALGGEIEMPSIDGSWTKLKIPEGTQSGDQIRMRGKGMPEVNSKDRRGDMYVHVTVETPVKLTKQQVDLLKKFEEESSANCSPKYQGFFQKIKDIWRDISSG</sequence>
<accession>Q5P9E0</accession>
<gene>
    <name evidence="1" type="primary">dnaJ</name>
    <name type="ordered locus">AM1296</name>
</gene>
<evidence type="ECO:0000255" key="1">
    <source>
        <dbReference type="HAMAP-Rule" id="MF_01152"/>
    </source>
</evidence>
<reference key="1">
    <citation type="journal article" date="2005" name="Proc. Natl. Acad. Sci. U.S.A.">
        <title>Complete genome sequencing of Anaplasma marginale reveals that the surface is skewed to two superfamilies of outer membrane proteins.</title>
        <authorList>
            <person name="Brayton K.A."/>
            <person name="Kappmeyer L.S."/>
            <person name="Herndon D.R."/>
            <person name="Dark M.J."/>
            <person name="Tibbals D.L."/>
            <person name="Palmer G.H."/>
            <person name="McGuire T.C."/>
            <person name="Knowles D.P. Jr."/>
        </authorList>
    </citation>
    <scope>NUCLEOTIDE SEQUENCE [LARGE SCALE GENOMIC DNA]</scope>
    <source>
        <strain>St. Maries</strain>
    </source>
</reference>